<reference key="1">
    <citation type="journal article" date="2001" name="Dokl. Biochem. Biophys.">
        <title>Interspecies subtractive hybridization of cDNA from human and chimpanzee brains.</title>
        <authorList>
            <person name="Nadezhdin E.V."/>
            <person name="Vinogradova T.V."/>
            <person name="Sverdlov E.D."/>
        </authorList>
    </citation>
    <scope>NUCLEOTIDE SEQUENCE [MRNA]</scope>
    <source>
        <tissue>Brain</tissue>
    </source>
</reference>
<reference key="2">
    <citation type="journal article" date="2007" name="Gene">
        <title>Mapping of chimpanzee full-length cDNAs onto the human genome unveils large potential divergence of the transcriptome.</title>
        <authorList>
            <person name="Sakate R."/>
            <person name="Suto Y."/>
            <person name="Imanishi T."/>
            <person name="Tanoue T."/>
            <person name="Hida M."/>
            <person name="Hayasaka I."/>
            <person name="Kusuda J."/>
            <person name="Gojobori T."/>
            <person name="Hashimoto K."/>
            <person name="Hirai M."/>
        </authorList>
    </citation>
    <scope>NUCLEOTIDE SEQUENCE [MRNA]</scope>
    <source>
        <tissue>Cerebellum</tissue>
    </source>
</reference>
<reference key="3">
    <citation type="journal article" date="2004" name="Cell">
        <title>Accelerated evolution of nervous system genes in the origin of Homo sapiens.</title>
        <authorList>
            <person name="Dorus S."/>
            <person name="Vallender E.J."/>
            <person name="Evans P.D."/>
            <person name="Anderson J.R."/>
            <person name="Gilbert S.L."/>
            <person name="Mahowald M."/>
            <person name="Wyckoff G.J."/>
            <person name="Malcom C.M."/>
            <person name="Lahn B.T."/>
        </authorList>
    </citation>
    <scope>NUCLEOTIDE SEQUENCE [MRNA] OF 28-147</scope>
</reference>
<keyword id="KW-0301">Gamma-carboxyglutamic acid</keyword>
<keyword id="KW-0325">Glycoprotein</keyword>
<keyword id="KW-0372">Hormone</keyword>
<keyword id="KW-0597">Phosphoprotein</keyword>
<keyword id="KW-1185">Reference proteome</keyword>
<keyword id="KW-0964">Secreted</keyword>
<keyword id="KW-0732">Signal</keyword>
<keyword id="KW-0765">Sulfation</keyword>
<keyword id="KW-0795">Thyroid hormone</keyword>
<keyword id="KW-0813">Transport</keyword>
<protein>
    <recommendedName>
        <fullName>Transthyretin</fullName>
    </recommendedName>
    <alternativeName>
        <fullName>Prealbumin</fullName>
    </alternativeName>
</protein>
<gene>
    <name type="primary">TTR</name>
</gene>
<name>TTHY_PANTR</name>
<sequence length="147" mass="15872">MASHRLLLLCLAGLVFVSEAGPTGTGESKCPLMVKVLDAVRGSPAINVAVHVFKKAADETWEPFASGKTSESGELHGLTTEEEFVEGIYKVEIDTKSYWKALGISPFHEHAEVVFTANDSGPRRYTIAALLSPYSYSTTAVVTIPKE</sequence>
<dbReference type="EMBL" id="AY785261">
    <property type="protein sequence ID" value="AAV41026.1"/>
    <property type="molecule type" value="mRNA"/>
</dbReference>
<dbReference type="EMBL" id="AB222105">
    <property type="protein sequence ID" value="BAF62350.1"/>
    <property type="molecule type" value="mRNA"/>
</dbReference>
<dbReference type="EMBL" id="AY665292">
    <property type="protein sequence ID" value="AAV74330.1"/>
    <property type="molecule type" value="mRNA"/>
</dbReference>
<dbReference type="RefSeq" id="NP_001009137.1">
    <property type="nucleotide sequence ID" value="NM_001009137.1"/>
</dbReference>
<dbReference type="BMRB" id="Q5U7I5"/>
<dbReference type="SMR" id="Q5U7I5"/>
<dbReference type="FunCoup" id="Q5U7I5">
    <property type="interactions" value="46"/>
</dbReference>
<dbReference type="STRING" id="9598.ENSPTRP00000081072"/>
<dbReference type="GlyCosmos" id="Q5U7I5">
    <property type="glycosylation" value="1 site, No reported glycans"/>
</dbReference>
<dbReference type="PaxDb" id="9598-ENSPTRP00000016916"/>
<dbReference type="Ensembl" id="ENSPTRT00000018264.4">
    <property type="protein sequence ID" value="ENSPTRP00000016916.4"/>
    <property type="gene ID" value="ENSPTRG00000009949.4"/>
</dbReference>
<dbReference type="GeneID" id="493188"/>
<dbReference type="KEGG" id="ptr:493188"/>
<dbReference type="CTD" id="7276"/>
<dbReference type="VGNC" id="VGNC:5217">
    <property type="gene designation" value="TTR"/>
</dbReference>
<dbReference type="eggNOG" id="KOG3006">
    <property type="taxonomic scope" value="Eukaryota"/>
</dbReference>
<dbReference type="GeneTree" id="ENSGT00940000153229"/>
<dbReference type="InParanoid" id="Q5U7I5"/>
<dbReference type="OMA" id="AMYKVEL"/>
<dbReference type="OrthoDB" id="7865at9604"/>
<dbReference type="Proteomes" id="UP000002277">
    <property type="component" value="Chromosome 18"/>
</dbReference>
<dbReference type="Bgee" id="ENSPTRG00000009949">
    <property type="expression patterns" value="Expressed in liver and 15 other cell types or tissues"/>
</dbReference>
<dbReference type="GO" id="GO:0005615">
    <property type="term" value="C:extracellular space"/>
    <property type="evidence" value="ECO:0000318"/>
    <property type="project" value="GO_Central"/>
</dbReference>
<dbReference type="GO" id="GO:0005179">
    <property type="term" value="F:hormone activity"/>
    <property type="evidence" value="ECO:0007669"/>
    <property type="project" value="UniProtKB-KW"/>
</dbReference>
<dbReference type="GO" id="GO:0006144">
    <property type="term" value="P:purine nucleobase metabolic process"/>
    <property type="evidence" value="ECO:0000318"/>
    <property type="project" value="GO_Central"/>
</dbReference>
<dbReference type="CDD" id="cd05821">
    <property type="entry name" value="TLP_Transthyretin"/>
    <property type="match status" value="1"/>
</dbReference>
<dbReference type="FunFam" id="2.60.40.180:FF:000002">
    <property type="entry name" value="Transthyretin"/>
    <property type="match status" value="1"/>
</dbReference>
<dbReference type="Gene3D" id="2.60.40.180">
    <property type="entry name" value="Transthyretin/hydroxyisourate hydrolase domain"/>
    <property type="match status" value="1"/>
</dbReference>
<dbReference type="InterPro" id="IPR023418">
    <property type="entry name" value="Thyroxine_BS"/>
</dbReference>
<dbReference type="InterPro" id="IPR000895">
    <property type="entry name" value="Transthyretin/HIU_hydrolase"/>
</dbReference>
<dbReference type="InterPro" id="IPR023416">
    <property type="entry name" value="Transthyretin/HIU_hydrolase_d"/>
</dbReference>
<dbReference type="InterPro" id="IPR036817">
    <property type="entry name" value="Transthyretin/HIU_hydrolase_sf"/>
</dbReference>
<dbReference type="InterPro" id="IPR023419">
    <property type="entry name" value="Transthyretin_CS"/>
</dbReference>
<dbReference type="PANTHER" id="PTHR10395:SF12">
    <property type="entry name" value="TRANSTHYRETIN"/>
    <property type="match status" value="1"/>
</dbReference>
<dbReference type="PANTHER" id="PTHR10395">
    <property type="entry name" value="URICASE AND TRANSTHYRETIN-RELATED"/>
    <property type="match status" value="1"/>
</dbReference>
<dbReference type="Pfam" id="PF00576">
    <property type="entry name" value="Transthyretin"/>
    <property type="match status" value="1"/>
</dbReference>
<dbReference type="PRINTS" id="PR00189">
    <property type="entry name" value="TRNSTHYRETIN"/>
</dbReference>
<dbReference type="SMART" id="SM00095">
    <property type="entry name" value="TR_THY"/>
    <property type="match status" value="1"/>
</dbReference>
<dbReference type="SUPFAM" id="SSF49472">
    <property type="entry name" value="Transthyretin (synonym: prealbumin)"/>
    <property type="match status" value="1"/>
</dbReference>
<dbReference type="PROSITE" id="PS00768">
    <property type="entry name" value="TRANSTHYRETIN_1"/>
    <property type="match status" value="1"/>
</dbReference>
<dbReference type="PROSITE" id="PS00769">
    <property type="entry name" value="TRANSTHYRETIN_2"/>
    <property type="match status" value="1"/>
</dbReference>
<feature type="signal peptide" evidence="1">
    <location>
        <begin position="1"/>
        <end position="20"/>
    </location>
</feature>
<feature type="chain" id="PRO_0000035761" description="Transthyretin">
    <location>
        <begin position="21"/>
        <end position="147"/>
    </location>
</feature>
<feature type="binding site" evidence="2">
    <location>
        <position position="35"/>
    </location>
    <ligand>
        <name>L-thyroxine</name>
        <dbReference type="ChEBI" id="CHEBI:58448"/>
    </ligand>
</feature>
<feature type="binding site" evidence="2">
    <location>
        <position position="74"/>
    </location>
    <ligand>
        <name>L-thyroxine</name>
        <dbReference type="ChEBI" id="CHEBI:58448"/>
    </ligand>
</feature>
<feature type="binding site" evidence="2">
    <location>
        <position position="137"/>
    </location>
    <ligand>
        <name>L-thyroxine</name>
        <dbReference type="ChEBI" id="CHEBI:58448"/>
    </ligand>
</feature>
<feature type="modified residue" description="Sulfocysteine" evidence="2">
    <location>
        <position position="30"/>
    </location>
</feature>
<feature type="modified residue" description="4-carboxyglutamate" evidence="2">
    <location>
        <position position="62"/>
    </location>
</feature>
<feature type="modified residue" description="Phosphoserine" evidence="3">
    <location>
        <position position="72"/>
    </location>
</feature>
<feature type="glycosylation site" description="N-linked (GlcNAc...) asparagine" evidence="4">
    <location>
        <position position="118"/>
    </location>
</feature>
<evidence type="ECO:0000250" key="1"/>
<evidence type="ECO:0000250" key="2">
    <source>
        <dbReference type="UniProtKB" id="P02766"/>
    </source>
</evidence>
<evidence type="ECO:0000250" key="3">
    <source>
        <dbReference type="UniProtKB" id="P02767"/>
    </source>
</evidence>
<evidence type="ECO:0000255" key="4"/>
<evidence type="ECO:0000305" key="5"/>
<proteinExistence type="evidence at transcript level"/>
<organism>
    <name type="scientific">Pan troglodytes</name>
    <name type="common">Chimpanzee</name>
    <dbReference type="NCBI Taxonomy" id="9598"/>
    <lineage>
        <taxon>Eukaryota</taxon>
        <taxon>Metazoa</taxon>
        <taxon>Chordata</taxon>
        <taxon>Craniata</taxon>
        <taxon>Vertebrata</taxon>
        <taxon>Euteleostomi</taxon>
        <taxon>Mammalia</taxon>
        <taxon>Eutheria</taxon>
        <taxon>Euarchontoglires</taxon>
        <taxon>Primates</taxon>
        <taxon>Haplorrhini</taxon>
        <taxon>Catarrhini</taxon>
        <taxon>Hominidae</taxon>
        <taxon>Pan</taxon>
    </lineage>
</organism>
<comment type="function">
    <text evidence="1">Thyroid hormone-binding protein. Probably transports thyroxine from the bloodstream to the brain (By similarity).</text>
</comment>
<comment type="subunit">
    <text evidence="1">Homotetramer. Dimer of dimers. In the homotetramer, subunits assemble around a central channel that can accommodate two ligand molecules. Interacts with RBP4 (By similarity).</text>
</comment>
<comment type="subcellular location">
    <subcellularLocation>
        <location evidence="1">Secreted</location>
    </subcellularLocation>
</comment>
<comment type="tissue specificity">
    <text>Detected in brain.</text>
</comment>
<comment type="PTM">
    <text evidence="2">Sulfonation of the reactive cysteine Cys-30 enhances the stability of the native conformation of TTR, avoiding misassembly of the protein leading to amyloid formation.</text>
</comment>
<comment type="similarity">
    <text evidence="5">Belongs to the transthyretin family.</text>
</comment>
<accession>Q5U7I5</accession>
<accession>A5A6H7</accession>
<accession>Q5IS36</accession>